<evidence type="ECO:0000255" key="1">
    <source>
        <dbReference type="HAMAP-Rule" id="MF_01588"/>
    </source>
</evidence>
<gene>
    <name evidence="1" type="primary">ligA</name>
    <name type="ordered locus">APJL_1315</name>
</gene>
<reference key="1">
    <citation type="journal article" date="2008" name="PLoS ONE">
        <title>Genome biology of Actinobacillus pleuropneumoniae JL03, an isolate of serotype 3 prevalent in China.</title>
        <authorList>
            <person name="Xu Z."/>
            <person name="Zhou Y."/>
            <person name="Li L."/>
            <person name="Zhou R."/>
            <person name="Xiao S."/>
            <person name="Wan Y."/>
            <person name="Zhang S."/>
            <person name="Wang K."/>
            <person name="Li W."/>
            <person name="Li L."/>
            <person name="Jin H."/>
            <person name="Kang M."/>
            <person name="Dalai B."/>
            <person name="Li T."/>
            <person name="Liu L."/>
            <person name="Cheng Y."/>
            <person name="Zhang L."/>
            <person name="Xu T."/>
            <person name="Zheng H."/>
            <person name="Pu S."/>
            <person name="Wang B."/>
            <person name="Gu W."/>
            <person name="Zhang X.L."/>
            <person name="Zhu G.-F."/>
            <person name="Wang S."/>
            <person name="Zhao G.-P."/>
            <person name="Chen H."/>
        </authorList>
    </citation>
    <scope>NUCLEOTIDE SEQUENCE [LARGE SCALE GENOMIC DNA]</scope>
    <source>
        <strain>JL03</strain>
    </source>
</reference>
<accession>B0BQN6</accession>
<feature type="chain" id="PRO_0000340322" description="DNA ligase">
    <location>
        <begin position="1"/>
        <end position="682"/>
    </location>
</feature>
<feature type="domain" description="BRCT" evidence="1">
    <location>
        <begin position="603"/>
        <end position="682"/>
    </location>
</feature>
<feature type="active site" description="N6-AMP-lysine intermediate" evidence="1">
    <location>
        <position position="126"/>
    </location>
</feature>
<feature type="binding site" evidence="1">
    <location>
        <begin position="42"/>
        <end position="46"/>
    </location>
    <ligand>
        <name>NAD(+)</name>
        <dbReference type="ChEBI" id="CHEBI:57540"/>
    </ligand>
</feature>
<feature type="binding site" evidence="1">
    <location>
        <begin position="91"/>
        <end position="92"/>
    </location>
    <ligand>
        <name>NAD(+)</name>
        <dbReference type="ChEBI" id="CHEBI:57540"/>
    </ligand>
</feature>
<feature type="binding site" evidence="1">
    <location>
        <position position="124"/>
    </location>
    <ligand>
        <name>NAD(+)</name>
        <dbReference type="ChEBI" id="CHEBI:57540"/>
    </ligand>
</feature>
<feature type="binding site" evidence="1">
    <location>
        <position position="147"/>
    </location>
    <ligand>
        <name>NAD(+)</name>
        <dbReference type="ChEBI" id="CHEBI:57540"/>
    </ligand>
</feature>
<feature type="binding site" evidence="1">
    <location>
        <position position="184"/>
    </location>
    <ligand>
        <name>NAD(+)</name>
        <dbReference type="ChEBI" id="CHEBI:57540"/>
    </ligand>
</feature>
<feature type="binding site" evidence="1">
    <location>
        <position position="302"/>
    </location>
    <ligand>
        <name>NAD(+)</name>
        <dbReference type="ChEBI" id="CHEBI:57540"/>
    </ligand>
</feature>
<feature type="binding site" evidence="1">
    <location>
        <position position="326"/>
    </location>
    <ligand>
        <name>NAD(+)</name>
        <dbReference type="ChEBI" id="CHEBI:57540"/>
    </ligand>
</feature>
<feature type="binding site" evidence="1">
    <location>
        <position position="420"/>
    </location>
    <ligand>
        <name>Zn(2+)</name>
        <dbReference type="ChEBI" id="CHEBI:29105"/>
    </ligand>
</feature>
<feature type="binding site" evidence="1">
    <location>
        <position position="423"/>
    </location>
    <ligand>
        <name>Zn(2+)</name>
        <dbReference type="ChEBI" id="CHEBI:29105"/>
    </ligand>
</feature>
<feature type="binding site" evidence="1">
    <location>
        <position position="438"/>
    </location>
    <ligand>
        <name>Zn(2+)</name>
        <dbReference type="ChEBI" id="CHEBI:29105"/>
    </ligand>
</feature>
<feature type="binding site" evidence="1">
    <location>
        <position position="444"/>
    </location>
    <ligand>
        <name>Zn(2+)</name>
        <dbReference type="ChEBI" id="CHEBI:29105"/>
    </ligand>
</feature>
<proteinExistence type="inferred from homology"/>
<comment type="function">
    <text evidence="1">DNA ligase that catalyzes the formation of phosphodiester linkages between 5'-phosphoryl and 3'-hydroxyl groups in double-stranded DNA using NAD as a coenzyme and as the energy source for the reaction. It is essential for DNA replication and repair of damaged DNA.</text>
</comment>
<comment type="catalytic activity">
    <reaction evidence="1">
        <text>NAD(+) + (deoxyribonucleotide)n-3'-hydroxyl + 5'-phospho-(deoxyribonucleotide)m = (deoxyribonucleotide)n+m + AMP + beta-nicotinamide D-nucleotide.</text>
        <dbReference type="EC" id="6.5.1.2"/>
    </reaction>
</comment>
<comment type="cofactor">
    <cofactor evidence="1">
        <name>Mg(2+)</name>
        <dbReference type="ChEBI" id="CHEBI:18420"/>
    </cofactor>
    <cofactor evidence="1">
        <name>Mn(2+)</name>
        <dbReference type="ChEBI" id="CHEBI:29035"/>
    </cofactor>
</comment>
<comment type="similarity">
    <text evidence="1">Belongs to the NAD-dependent DNA ligase family. LigA subfamily.</text>
</comment>
<protein>
    <recommendedName>
        <fullName evidence="1">DNA ligase</fullName>
        <ecNumber evidence="1">6.5.1.2</ecNumber>
    </recommendedName>
    <alternativeName>
        <fullName evidence="1">Polydeoxyribonucleotide synthase [NAD(+)]</fullName>
    </alternativeName>
</protein>
<keyword id="KW-0227">DNA damage</keyword>
<keyword id="KW-0234">DNA repair</keyword>
<keyword id="KW-0235">DNA replication</keyword>
<keyword id="KW-0436">Ligase</keyword>
<keyword id="KW-0460">Magnesium</keyword>
<keyword id="KW-0464">Manganese</keyword>
<keyword id="KW-0479">Metal-binding</keyword>
<keyword id="KW-0520">NAD</keyword>
<keyword id="KW-0862">Zinc</keyword>
<sequence length="682" mass="75693">MPLLSQMQDQSGTTFAQLEALRQKLREYEYYYHVLDNPLVPDAEYDRLMNELKNLEWQHPEWITADSPTQRVGAKPLDGFAQVTHEIPMLSLDNAFSDEELDGFLRRMESYITEDPHTLAFCCEPKLDGLAVSILYVDGVLSQAATRGDGTTGEDITSNIRTVRNIPLKLNMDNPPARLEVRGEVFMPQKGFETLNERALEKGEKTFANPRNAAAGSLRQLDPKITRQRPLVLNAYGIGVYESDDELPATHFERLQWLKSIGIPVNNEIRLATGREQLLAFYADIQAKRPTLGYDIDGTVLKVNDIGLQEQLGFISRSPRWAIAYKFPAQEEMTVLNDVEFQVGRTGAITPVAKLEPVFVAGVTVSNATLHNGDEIERLGIVIGDTVIIRRAGDVIPQIVGVVMERRPENAKKIEFPTACPVCESAVVRVEGEAVARCTGGLFCGAQRKEALKHFVSRKAMDIDGVGEKLIEQLMERELVHTPADLFKLEHTTLMRLERMGGKSAQNALNSIEKAKNTTLARFLFALGIRDVGEATAQNLANHFHNLDAIRAATFEQLQEVQDVGEVVANRIVRFWQEPHNVTVVEDLISQGIHWQDVVQVEIADNPLKGKSVVLTGTLTQLTRDQAKALLQSFGCKVSGSVSSKTDYLIAGEKAGSKLAKAQELGVKVLTEQEFIALTGEN</sequence>
<name>DNLJ_ACTPJ</name>
<organism>
    <name type="scientific">Actinobacillus pleuropneumoniae serotype 3 (strain JL03)</name>
    <dbReference type="NCBI Taxonomy" id="434271"/>
    <lineage>
        <taxon>Bacteria</taxon>
        <taxon>Pseudomonadati</taxon>
        <taxon>Pseudomonadota</taxon>
        <taxon>Gammaproteobacteria</taxon>
        <taxon>Pasteurellales</taxon>
        <taxon>Pasteurellaceae</taxon>
        <taxon>Actinobacillus</taxon>
    </lineage>
</organism>
<dbReference type="EC" id="6.5.1.2" evidence="1"/>
<dbReference type="EMBL" id="CP000687">
    <property type="protein sequence ID" value="ABY69871.1"/>
    <property type="molecule type" value="Genomic_DNA"/>
</dbReference>
<dbReference type="RefSeq" id="WP_012263172.1">
    <property type="nucleotide sequence ID" value="NC_010278.1"/>
</dbReference>
<dbReference type="SMR" id="B0BQN6"/>
<dbReference type="KEGG" id="apj:APJL_1315"/>
<dbReference type="HOGENOM" id="CLU_007764_2_1_6"/>
<dbReference type="Proteomes" id="UP000008547">
    <property type="component" value="Chromosome"/>
</dbReference>
<dbReference type="GO" id="GO:0005829">
    <property type="term" value="C:cytosol"/>
    <property type="evidence" value="ECO:0007669"/>
    <property type="project" value="TreeGrafter"/>
</dbReference>
<dbReference type="GO" id="GO:0003677">
    <property type="term" value="F:DNA binding"/>
    <property type="evidence" value="ECO:0007669"/>
    <property type="project" value="InterPro"/>
</dbReference>
<dbReference type="GO" id="GO:0003911">
    <property type="term" value="F:DNA ligase (NAD+) activity"/>
    <property type="evidence" value="ECO:0007669"/>
    <property type="project" value="UniProtKB-UniRule"/>
</dbReference>
<dbReference type="GO" id="GO:0046872">
    <property type="term" value="F:metal ion binding"/>
    <property type="evidence" value="ECO:0007669"/>
    <property type="project" value="UniProtKB-KW"/>
</dbReference>
<dbReference type="GO" id="GO:0006281">
    <property type="term" value="P:DNA repair"/>
    <property type="evidence" value="ECO:0007669"/>
    <property type="project" value="UniProtKB-KW"/>
</dbReference>
<dbReference type="GO" id="GO:0006260">
    <property type="term" value="P:DNA replication"/>
    <property type="evidence" value="ECO:0007669"/>
    <property type="project" value="UniProtKB-KW"/>
</dbReference>
<dbReference type="CDD" id="cd17748">
    <property type="entry name" value="BRCT_DNA_ligase_like"/>
    <property type="match status" value="1"/>
</dbReference>
<dbReference type="CDD" id="cd00114">
    <property type="entry name" value="LIGANc"/>
    <property type="match status" value="1"/>
</dbReference>
<dbReference type="FunFam" id="1.10.150.20:FF:000006">
    <property type="entry name" value="DNA ligase"/>
    <property type="match status" value="1"/>
</dbReference>
<dbReference type="FunFam" id="1.10.150.20:FF:000007">
    <property type="entry name" value="DNA ligase"/>
    <property type="match status" value="1"/>
</dbReference>
<dbReference type="FunFam" id="1.10.287.610:FF:000002">
    <property type="entry name" value="DNA ligase"/>
    <property type="match status" value="1"/>
</dbReference>
<dbReference type="FunFam" id="2.40.50.140:FF:000012">
    <property type="entry name" value="DNA ligase"/>
    <property type="match status" value="1"/>
</dbReference>
<dbReference type="FunFam" id="3.30.470.30:FF:000001">
    <property type="entry name" value="DNA ligase"/>
    <property type="match status" value="1"/>
</dbReference>
<dbReference type="FunFam" id="6.20.10.30:FF:000001">
    <property type="entry name" value="DNA ligase"/>
    <property type="match status" value="1"/>
</dbReference>
<dbReference type="Gene3D" id="6.20.10.30">
    <property type="match status" value="1"/>
</dbReference>
<dbReference type="Gene3D" id="1.10.150.20">
    <property type="entry name" value="5' to 3' exonuclease, C-terminal subdomain"/>
    <property type="match status" value="2"/>
</dbReference>
<dbReference type="Gene3D" id="3.40.50.10190">
    <property type="entry name" value="BRCT domain"/>
    <property type="match status" value="1"/>
</dbReference>
<dbReference type="Gene3D" id="3.30.470.30">
    <property type="entry name" value="DNA ligase/mRNA capping enzyme"/>
    <property type="match status" value="1"/>
</dbReference>
<dbReference type="Gene3D" id="1.10.287.610">
    <property type="entry name" value="Helix hairpin bin"/>
    <property type="match status" value="1"/>
</dbReference>
<dbReference type="Gene3D" id="2.40.50.140">
    <property type="entry name" value="Nucleic acid-binding proteins"/>
    <property type="match status" value="1"/>
</dbReference>
<dbReference type="HAMAP" id="MF_01588">
    <property type="entry name" value="DNA_ligase_A"/>
    <property type="match status" value="1"/>
</dbReference>
<dbReference type="InterPro" id="IPR001357">
    <property type="entry name" value="BRCT_dom"/>
</dbReference>
<dbReference type="InterPro" id="IPR036420">
    <property type="entry name" value="BRCT_dom_sf"/>
</dbReference>
<dbReference type="InterPro" id="IPR041663">
    <property type="entry name" value="DisA/LigA_HHH"/>
</dbReference>
<dbReference type="InterPro" id="IPR001679">
    <property type="entry name" value="DNA_ligase"/>
</dbReference>
<dbReference type="InterPro" id="IPR018239">
    <property type="entry name" value="DNA_ligase_AS"/>
</dbReference>
<dbReference type="InterPro" id="IPR033136">
    <property type="entry name" value="DNA_ligase_CS"/>
</dbReference>
<dbReference type="InterPro" id="IPR013839">
    <property type="entry name" value="DNAligase_adenylation"/>
</dbReference>
<dbReference type="InterPro" id="IPR013840">
    <property type="entry name" value="DNAligase_N"/>
</dbReference>
<dbReference type="InterPro" id="IPR003583">
    <property type="entry name" value="Hlx-hairpin-Hlx_DNA-bd_motif"/>
</dbReference>
<dbReference type="InterPro" id="IPR012340">
    <property type="entry name" value="NA-bd_OB-fold"/>
</dbReference>
<dbReference type="InterPro" id="IPR004150">
    <property type="entry name" value="NAD_DNA_ligase_OB"/>
</dbReference>
<dbReference type="InterPro" id="IPR010994">
    <property type="entry name" value="RuvA_2-like"/>
</dbReference>
<dbReference type="InterPro" id="IPR004149">
    <property type="entry name" value="Znf_DNAligase_C4"/>
</dbReference>
<dbReference type="NCBIfam" id="TIGR00575">
    <property type="entry name" value="dnlj"/>
    <property type="match status" value="1"/>
</dbReference>
<dbReference type="NCBIfam" id="NF005932">
    <property type="entry name" value="PRK07956.1"/>
    <property type="match status" value="1"/>
</dbReference>
<dbReference type="PANTHER" id="PTHR23389">
    <property type="entry name" value="CHROMOSOME TRANSMISSION FIDELITY FACTOR 18"/>
    <property type="match status" value="1"/>
</dbReference>
<dbReference type="PANTHER" id="PTHR23389:SF9">
    <property type="entry name" value="DNA LIGASE"/>
    <property type="match status" value="1"/>
</dbReference>
<dbReference type="Pfam" id="PF00533">
    <property type="entry name" value="BRCT"/>
    <property type="match status" value="1"/>
</dbReference>
<dbReference type="Pfam" id="PF01653">
    <property type="entry name" value="DNA_ligase_aden"/>
    <property type="match status" value="1"/>
</dbReference>
<dbReference type="Pfam" id="PF03120">
    <property type="entry name" value="DNA_ligase_OB"/>
    <property type="match status" value="1"/>
</dbReference>
<dbReference type="Pfam" id="PF03119">
    <property type="entry name" value="DNA_ligase_ZBD"/>
    <property type="match status" value="1"/>
</dbReference>
<dbReference type="Pfam" id="PF12826">
    <property type="entry name" value="HHH_2"/>
    <property type="match status" value="1"/>
</dbReference>
<dbReference type="Pfam" id="PF14520">
    <property type="entry name" value="HHH_5"/>
    <property type="match status" value="1"/>
</dbReference>
<dbReference type="Pfam" id="PF22745">
    <property type="entry name" value="Nlig-Ia"/>
    <property type="match status" value="1"/>
</dbReference>
<dbReference type="PIRSF" id="PIRSF001604">
    <property type="entry name" value="LigA"/>
    <property type="match status" value="1"/>
</dbReference>
<dbReference type="SMART" id="SM00292">
    <property type="entry name" value="BRCT"/>
    <property type="match status" value="1"/>
</dbReference>
<dbReference type="SMART" id="SM00278">
    <property type="entry name" value="HhH1"/>
    <property type="match status" value="4"/>
</dbReference>
<dbReference type="SMART" id="SM00532">
    <property type="entry name" value="LIGANc"/>
    <property type="match status" value="1"/>
</dbReference>
<dbReference type="SUPFAM" id="SSF52113">
    <property type="entry name" value="BRCT domain"/>
    <property type="match status" value="1"/>
</dbReference>
<dbReference type="SUPFAM" id="SSF56091">
    <property type="entry name" value="DNA ligase/mRNA capping enzyme, catalytic domain"/>
    <property type="match status" value="1"/>
</dbReference>
<dbReference type="SUPFAM" id="SSF50249">
    <property type="entry name" value="Nucleic acid-binding proteins"/>
    <property type="match status" value="1"/>
</dbReference>
<dbReference type="SUPFAM" id="SSF47781">
    <property type="entry name" value="RuvA domain 2-like"/>
    <property type="match status" value="1"/>
</dbReference>
<dbReference type="PROSITE" id="PS50172">
    <property type="entry name" value="BRCT"/>
    <property type="match status" value="1"/>
</dbReference>
<dbReference type="PROSITE" id="PS01055">
    <property type="entry name" value="DNA_LIGASE_N1"/>
    <property type="match status" value="1"/>
</dbReference>
<dbReference type="PROSITE" id="PS01056">
    <property type="entry name" value="DNA_LIGASE_N2"/>
    <property type="match status" value="1"/>
</dbReference>